<evidence type="ECO:0000250" key="1"/>
<evidence type="ECO:0000255" key="2">
    <source>
        <dbReference type="HAMAP-Rule" id="MF_00624"/>
    </source>
</evidence>
<protein>
    <recommendedName>
        <fullName evidence="2">Glucose-1-phosphate adenylyltransferase</fullName>
        <ecNumber evidence="2">2.7.7.27</ecNumber>
    </recommendedName>
    <alternativeName>
        <fullName evidence="2">ADP-glucose pyrophosphorylase</fullName>
        <shortName evidence="2">ADPGlc PPase</shortName>
    </alternativeName>
    <alternativeName>
        <fullName evidence="2">ADP-glucose synthase</fullName>
    </alternativeName>
</protein>
<proteinExistence type="inferred from homology"/>
<sequence>MVSLEKNDHLMLARQLPLKSVALILAGGRGTRLKDLTNKRAKPAVHFGGKFRIIDFALSNCINSGIRRMGVITQYQSHTLVQHIQRGWSFFNEEMNEFVDLLPAQQRMKGENWYRGTADAVTQNLDIIRRYKAEYVVILAGDHIYKQDYSRMLIDHVEKGARCTVACMPVPIEEASAFGVMAVDENDKIIEFVEKPANPPSMPNDPSKSLASMGIYVFDADYLYELLEEDDRDENSSHDFGKDLIPKITEAGLAYAHPFPLSCVQSDPDAEPYWRDVGTLEAYWKANLDLASVVPELDMYDRNWPIRTYNESLPPAKFVQDRSGSHGMTLNSLVSGGCVISGSVVVQSVLFSRVRVNSFCNIDSAVLLPEVWVGRSCRLRRCVIDRACVIPEGMVIGENAEEDARRFYRSEEGIVLVTREMLRKLGHKQER</sequence>
<keyword id="KW-0021">Allosteric enzyme</keyword>
<keyword id="KW-0067">ATP-binding</keyword>
<keyword id="KW-0119">Carbohydrate metabolism</keyword>
<keyword id="KW-0320">Glycogen biosynthesis</keyword>
<keyword id="KW-0321">Glycogen metabolism</keyword>
<keyword id="KW-0547">Nucleotide-binding</keyword>
<keyword id="KW-0548">Nucleotidyltransferase</keyword>
<keyword id="KW-1185">Reference proteome</keyword>
<keyword id="KW-0808">Transferase</keyword>
<gene>
    <name evidence="2" type="primary">glgC</name>
    <name type="ordered locus">Z4792</name>
    <name type="ordered locus">ECs4275</name>
</gene>
<comment type="function">
    <text evidence="2">Involved in the biosynthesis of ADP-glucose, a building block required for the elongation reactions to produce glycogen. Catalyzes the reaction between ATP and alpha-D-glucose 1-phosphate (G1P) to produce pyrophosphate and ADP-Glc.</text>
</comment>
<comment type="catalytic activity">
    <reaction evidence="2">
        <text>alpha-D-glucose 1-phosphate + ATP + H(+) = ADP-alpha-D-glucose + diphosphate</text>
        <dbReference type="Rhea" id="RHEA:12120"/>
        <dbReference type="ChEBI" id="CHEBI:15378"/>
        <dbReference type="ChEBI" id="CHEBI:30616"/>
        <dbReference type="ChEBI" id="CHEBI:33019"/>
        <dbReference type="ChEBI" id="CHEBI:57498"/>
        <dbReference type="ChEBI" id="CHEBI:58601"/>
        <dbReference type="EC" id="2.7.7.27"/>
    </reaction>
</comment>
<comment type="activity regulation">
    <text evidence="2">Allosterically activated by fructose-1,6-bisphosphate (F16BP) and inhibited by AMP.</text>
</comment>
<comment type="pathway">
    <text evidence="2">Glycan biosynthesis; glycogen biosynthesis.</text>
</comment>
<comment type="subunit">
    <text evidence="2">Homotetramer.</text>
</comment>
<comment type="similarity">
    <text evidence="2">Belongs to the bacterial/plant glucose-1-phosphate adenylyltransferase family.</text>
</comment>
<name>GLGC_ECO57</name>
<organism>
    <name type="scientific">Escherichia coli O157:H7</name>
    <dbReference type="NCBI Taxonomy" id="83334"/>
    <lineage>
        <taxon>Bacteria</taxon>
        <taxon>Pseudomonadati</taxon>
        <taxon>Pseudomonadota</taxon>
        <taxon>Gammaproteobacteria</taxon>
        <taxon>Enterobacterales</taxon>
        <taxon>Enterobacteriaceae</taxon>
        <taxon>Escherichia</taxon>
    </lineage>
</organism>
<reference key="1">
    <citation type="journal article" date="2001" name="Nature">
        <title>Genome sequence of enterohaemorrhagic Escherichia coli O157:H7.</title>
        <authorList>
            <person name="Perna N.T."/>
            <person name="Plunkett G. III"/>
            <person name="Burland V."/>
            <person name="Mau B."/>
            <person name="Glasner J.D."/>
            <person name="Rose D.J."/>
            <person name="Mayhew G.F."/>
            <person name="Evans P.S."/>
            <person name="Gregor J."/>
            <person name="Kirkpatrick H.A."/>
            <person name="Posfai G."/>
            <person name="Hackett J."/>
            <person name="Klink S."/>
            <person name="Boutin A."/>
            <person name="Shao Y."/>
            <person name="Miller L."/>
            <person name="Grotbeck E.J."/>
            <person name="Davis N.W."/>
            <person name="Lim A."/>
            <person name="Dimalanta E.T."/>
            <person name="Potamousis K."/>
            <person name="Apodaca J."/>
            <person name="Anantharaman T.S."/>
            <person name="Lin J."/>
            <person name="Yen G."/>
            <person name="Schwartz D.C."/>
            <person name="Welch R.A."/>
            <person name="Blattner F.R."/>
        </authorList>
    </citation>
    <scope>NUCLEOTIDE SEQUENCE [LARGE SCALE GENOMIC DNA]</scope>
    <source>
        <strain>O157:H7 / EDL933 / ATCC 700927 / EHEC</strain>
    </source>
</reference>
<reference key="2">
    <citation type="journal article" date="2001" name="DNA Res.">
        <title>Complete genome sequence of enterohemorrhagic Escherichia coli O157:H7 and genomic comparison with a laboratory strain K-12.</title>
        <authorList>
            <person name="Hayashi T."/>
            <person name="Makino K."/>
            <person name="Ohnishi M."/>
            <person name="Kurokawa K."/>
            <person name="Ishii K."/>
            <person name="Yokoyama K."/>
            <person name="Han C.-G."/>
            <person name="Ohtsubo E."/>
            <person name="Nakayama K."/>
            <person name="Murata T."/>
            <person name="Tanaka M."/>
            <person name="Tobe T."/>
            <person name="Iida T."/>
            <person name="Takami H."/>
            <person name="Honda T."/>
            <person name="Sasakawa C."/>
            <person name="Ogasawara N."/>
            <person name="Yasunaga T."/>
            <person name="Kuhara S."/>
            <person name="Shiba T."/>
            <person name="Hattori M."/>
            <person name="Shinagawa H."/>
        </authorList>
    </citation>
    <scope>NUCLEOTIDE SEQUENCE [LARGE SCALE GENOMIC DNA]</scope>
    <source>
        <strain>O157:H7 / Sakai / RIMD 0509952 / EHEC</strain>
    </source>
</reference>
<accession>P0A6V3</accession>
<accession>P00584</accession>
<dbReference type="EC" id="2.7.7.27" evidence="2"/>
<dbReference type="EMBL" id="AE005174">
    <property type="protein sequence ID" value="AAG58536.1"/>
    <property type="molecule type" value="Genomic_DNA"/>
</dbReference>
<dbReference type="EMBL" id="BA000007">
    <property type="protein sequence ID" value="BAB37698.1"/>
    <property type="molecule type" value="Genomic_DNA"/>
</dbReference>
<dbReference type="PIR" id="C91163">
    <property type="entry name" value="C91163"/>
</dbReference>
<dbReference type="PIR" id="D86009">
    <property type="entry name" value="D86009"/>
</dbReference>
<dbReference type="RefSeq" id="NP_312302.1">
    <property type="nucleotide sequence ID" value="NC_002695.1"/>
</dbReference>
<dbReference type="RefSeq" id="WP_000253975.1">
    <property type="nucleotide sequence ID" value="NZ_VOAI01000004.1"/>
</dbReference>
<dbReference type="SMR" id="P0A6V3"/>
<dbReference type="STRING" id="155864.Z4792"/>
<dbReference type="GeneID" id="915871"/>
<dbReference type="GeneID" id="93778559"/>
<dbReference type="KEGG" id="ece:Z4792"/>
<dbReference type="KEGG" id="ecs:ECs_4275"/>
<dbReference type="PATRIC" id="fig|386585.9.peg.4466"/>
<dbReference type="eggNOG" id="COG0448">
    <property type="taxonomic scope" value="Bacteria"/>
</dbReference>
<dbReference type="HOGENOM" id="CLU_029499_14_1_6"/>
<dbReference type="OMA" id="YPLTKMR"/>
<dbReference type="UniPathway" id="UPA00164"/>
<dbReference type="Proteomes" id="UP000000558">
    <property type="component" value="Chromosome"/>
</dbReference>
<dbReference type="Proteomes" id="UP000002519">
    <property type="component" value="Chromosome"/>
</dbReference>
<dbReference type="GO" id="GO:0005524">
    <property type="term" value="F:ATP binding"/>
    <property type="evidence" value="ECO:0007669"/>
    <property type="project" value="UniProtKB-KW"/>
</dbReference>
<dbReference type="GO" id="GO:0008878">
    <property type="term" value="F:glucose-1-phosphate adenylyltransferase activity"/>
    <property type="evidence" value="ECO:0007669"/>
    <property type="project" value="UniProtKB-UniRule"/>
</dbReference>
<dbReference type="GO" id="GO:0005978">
    <property type="term" value="P:glycogen biosynthetic process"/>
    <property type="evidence" value="ECO:0007669"/>
    <property type="project" value="UniProtKB-UniRule"/>
</dbReference>
<dbReference type="CDD" id="cd02508">
    <property type="entry name" value="ADP_Glucose_PP"/>
    <property type="match status" value="1"/>
</dbReference>
<dbReference type="CDD" id="cd04651">
    <property type="entry name" value="LbH_G1P_AT_C"/>
    <property type="match status" value="1"/>
</dbReference>
<dbReference type="FunFam" id="2.160.10.10:FF:000006">
    <property type="entry name" value="Glucose-1-phosphate adenylyltransferase"/>
    <property type="match status" value="1"/>
</dbReference>
<dbReference type="FunFam" id="3.90.550.10:FF:000014">
    <property type="entry name" value="Glucose-1-phosphate adenylyltransferase"/>
    <property type="match status" value="1"/>
</dbReference>
<dbReference type="Gene3D" id="2.160.10.10">
    <property type="entry name" value="Hexapeptide repeat proteins"/>
    <property type="match status" value="1"/>
</dbReference>
<dbReference type="Gene3D" id="3.90.550.10">
    <property type="entry name" value="Spore Coat Polysaccharide Biosynthesis Protein SpsA, Chain A"/>
    <property type="match status" value="1"/>
</dbReference>
<dbReference type="HAMAP" id="MF_00624">
    <property type="entry name" value="GlgC"/>
    <property type="match status" value="1"/>
</dbReference>
<dbReference type="InterPro" id="IPR011831">
    <property type="entry name" value="ADP-Glc_PPase"/>
</dbReference>
<dbReference type="InterPro" id="IPR005836">
    <property type="entry name" value="ADP_Glu_pyroP_CS"/>
</dbReference>
<dbReference type="InterPro" id="IPR023049">
    <property type="entry name" value="GlgC_bac"/>
</dbReference>
<dbReference type="InterPro" id="IPR056818">
    <property type="entry name" value="GlmU/GlgC-like_hexapep"/>
</dbReference>
<dbReference type="InterPro" id="IPR005835">
    <property type="entry name" value="NTP_transferase_dom"/>
</dbReference>
<dbReference type="InterPro" id="IPR029044">
    <property type="entry name" value="Nucleotide-diphossugar_trans"/>
</dbReference>
<dbReference type="InterPro" id="IPR011004">
    <property type="entry name" value="Trimer_LpxA-like_sf"/>
</dbReference>
<dbReference type="NCBIfam" id="TIGR02091">
    <property type="entry name" value="glgC"/>
    <property type="match status" value="1"/>
</dbReference>
<dbReference type="NCBIfam" id="NF001947">
    <property type="entry name" value="PRK00725.1"/>
    <property type="match status" value="1"/>
</dbReference>
<dbReference type="NCBIfam" id="NF002023">
    <property type="entry name" value="PRK00844.1"/>
    <property type="match status" value="1"/>
</dbReference>
<dbReference type="PANTHER" id="PTHR43523:SF2">
    <property type="entry name" value="GLUCOSE-1-PHOSPHATE ADENYLYLTRANSFERASE"/>
    <property type="match status" value="1"/>
</dbReference>
<dbReference type="PANTHER" id="PTHR43523">
    <property type="entry name" value="GLUCOSE-1-PHOSPHATE ADENYLYLTRANSFERASE-RELATED"/>
    <property type="match status" value="1"/>
</dbReference>
<dbReference type="Pfam" id="PF24894">
    <property type="entry name" value="Hexapep_GlmU"/>
    <property type="match status" value="1"/>
</dbReference>
<dbReference type="Pfam" id="PF00483">
    <property type="entry name" value="NTP_transferase"/>
    <property type="match status" value="1"/>
</dbReference>
<dbReference type="SUPFAM" id="SSF53448">
    <property type="entry name" value="Nucleotide-diphospho-sugar transferases"/>
    <property type="match status" value="1"/>
</dbReference>
<dbReference type="SUPFAM" id="SSF51161">
    <property type="entry name" value="Trimeric LpxA-like enzymes"/>
    <property type="match status" value="1"/>
</dbReference>
<dbReference type="PROSITE" id="PS00808">
    <property type="entry name" value="ADP_GLC_PYROPHOSPH_1"/>
    <property type="match status" value="1"/>
</dbReference>
<dbReference type="PROSITE" id="PS00809">
    <property type="entry name" value="ADP_GLC_PYROPHOSPH_2"/>
    <property type="match status" value="1"/>
</dbReference>
<dbReference type="PROSITE" id="PS00810">
    <property type="entry name" value="ADP_GLC_PYROPHOSPH_3"/>
    <property type="match status" value="1"/>
</dbReference>
<feature type="initiator methionine" description="Removed" evidence="1">
    <location>
        <position position="1"/>
    </location>
</feature>
<feature type="chain" id="PRO_0000195296" description="Glucose-1-phosphate adenylyltransferase">
    <location>
        <begin position="2"/>
        <end position="431"/>
    </location>
</feature>
<feature type="binding site" evidence="2">
    <location>
        <position position="39"/>
    </location>
    <ligand>
        <name>beta-D-fructose 1,6-bisphosphate</name>
        <dbReference type="ChEBI" id="CHEBI:32966"/>
    </ligand>
</feature>
<feature type="binding site" evidence="2">
    <location>
        <position position="40"/>
    </location>
    <ligand>
        <name>AMP</name>
        <dbReference type="ChEBI" id="CHEBI:456215"/>
    </ligand>
</feature>
<feature type="binding site" evidence="2">
    <location>
        <position position="46"/>
    </location>
    <ligand>
        <name>AMP</name>
        <dbReference type="ChEBI" id="CHEBI:456215"/>
    </ligand>
</feature>
<feature type="binding site" evidence="2">
    <location>
        <position position="52"/>
    </location>
    <ligand>
        <name>AMP</name>
        <dbReference type="ChEBI" id="CHEBI:456215"/>
    </ligand>
</feature>
<feature type="binding site" evidence="2">
    <location>
        <position position="114"/>
    </location>
    <ligand>
        <name>alpha-D-glucose 1-phosphate</name>
        <dbReference type="ChEBI" id="CHEBI:58601"/>
    </ligand>
</feature>
<feature type="binding site" evidence="2">
    <location>
        <position position="130"/>
    </location>
    <ligand>
        <name>AMP</name>
        <dbReference type="ChEBI" id="CHEBI:456215"/>
    </ligand>
</feature>
<feature type="binding site" evidence="2">
    <location>
        <position position="179"/>
    </location>
    <ligand>
        <name>alpha-D-glucose 1-phosphate</name>
        <dbReference type="ChEBI" id="CHEBI:58601"/>
    </ligand>
</feature>
<feature type="binding site" evidence="2">
    <location>
        <begin position="194"/>
        <end position="195"/>
    </location>
    <ligand>
        <name>alpha-D-glucose 1-phosphate</name>
        <dbReference type="ChEBI" id="CHEBI:58601"/>
    </ligand>
</feature>
<feature type="binding site" evidence="2">
    <location>
        <position position="212"/>
    </location>
    <ligand>
        <name>alpha-D-glucose 1-phosphate</name>
        <dbReference type="ChEBI" id="CHEBI:58601"/>
    </ligand>
</feature>
<feature type="binding site" evidence="2">
    <location>
        <position position="370"/>
    </location>
    <ligand>
        <name>AMP</name>
        <dbReference type="ChEBI" id="CHEBI:456215"/>
    </ligand>
</feature>
<feature type="binding site" evidence="2">
    <location>
        <position position="386"/>
    </location>
    <ligand>
        <name>AMP</name>
        <dbReference type="ChEBI" id="CHEBI:456215"/>
    </ligand>
</feature>
<feature type="binding site" evidence="2">
    <location>
        <begin position="419"/>
        <end position="423"/>
    </location>
    <ligand>
        <name>beta-D-fructose 1,6-bisphosphate</name>
        <dbReference type="ChEBI" id="CHEBI:32966"/>
    </ligand>
</feature>
<feature type="binding site" evidence="2">
    <location>
        <begin position="429"/>
        <end position="431"/>
    </location>
    <ligand>
        <name>beta-D-fructose 1,6-bisphosphate</name>
        <dbReference type="ChEBI" id="CHEBI:32966"/>
    </ligand>
</feature>
<feature type="site" description="Could play a key role in the communication between the regulatory and the substrate sites" evidence="2">
    <location>
        <position position="74"/>
    </location>
</feature>
<feature type="site" description="Could play a key role in the communication between the regulatory and the substrate sites" evidence="2">
    <location>
        <position position="113"/>
    </location>
</feature>